<name>NTRB_SHIFL</name>
<sequence>MATGTQPDAGQILNSLINSILLIDDNLAIHYANPAAQQLLAQSSRKLFGTPLPELLSYFSLNIELMQESLEAGQGFTDNEVTLVIDGRSHILSVTAQRMPDGMILLEMAPMDNQRRLSQEQLQHAQQVAARDLVRGLAHEIKNPLGGLRGAAQLLSKALPDPSLLEYTKVIIEQADRLRNLVDRLLGPQLPGTRVTESIHKVAERVVTLVSMELPDNVRLIRDYDPSLPELAHDPDQIEQVLLNIVRNALQALGPEGGEIILRTRTAFQLTLHGERYRLAARIDVEDNGPGIPPHLQDTLFYPMVSGREGGTGLGLSIARNLIDQHSGKIEFTSWPGHTEFSVYLPIRK</sequence>
<accession>P0AFB7</accession>
<accession>P06712</accession>
<comment type="function">
    <text evidence="2">Member of the two-component regulatory system NtrB/NtrC, which controls expression of the nitrogen-regulated (ntr) genes in response to nitrogen limitation. Under conditions of nitrogen limitation, NtrB autophosphorylates and transfers the phosphoryl group to NtrC. In the presence of nitrogen, acts as a phosphatase that dephosphorylates and inactivates NtrC.</text>
</comment>
<comment type="catalytic activity">
    <reaction evidence="2">
        <text>ATP + protein L-histidine = ADP + protein N-phospho-L-histidine.</text>
        <dbReference type="EC" id="2.7.13.3"/>
    </reaction>
</comment>
<comment type="subcellular location">
    <subcellularLocation>
        <location evidence="2">Cytoplasm</location>
    </subcellularLocation>
</comment>
<comment type="PTM">
    <text evidence="2">Autophosphorylated.</text>
</comment>
<feature type="chain" id="PRO_0000074824" description="Sensory histidine kinase/phosphatase NtrB">
    <location>
        <begin position="1"/>
        <end position="349"/>
    </location>
</feature>
<feature type="domain" description="PAS" evidence="4">
    <location>
        <begin position="5"/>
        <end position="78"/>
    </location>
</feature>
<feature type="domain" description="Histidine kinase" evidence="3">
    <location>
        <begin position="136"/>
        <end position="349"/>
    </location>
</feature>
<feature type="binding site" evidence="1">
    <location>
        <position position="329"/>
    </location>
    <ligand>
        <name>ATP</name>
        <dbReference type="ChEBI" id="CHEBI:30616"/>
    </ligand>
</feature>
<feature type="modified residue" description="Phosphohistidine; by autocatalysis" evidence="3">
    <location>
        <position position="139"/>
    </location>
</feature>
<reference key="1">
    <citation type="journal article" date="2002" name="Nucleic Acids Res.">
        <title>Genome sequence of Shigella flexneri 2a: insights into pathogenicity through comparison with genomes of Escherichia coli K12 and O157.</title>
        <authorList>
            <person name="Jin Q."/>
            <person name="Yuan Z."/>
            <person name="Xu J."/>
            <person name="Wang Y."/>
            <person name="Shen Y."/>
            <person name="Lu W."/>
            <person name="Wang J."/>
            <person name="Liu H."/>
            <person name="Yang J."/>
            <person name="Yang F."/>
            <person name="Zhang X."/>
            <person name="Zhang J."/>
            <person name="Yang G."/>
            <person name="Wu H."/>
            <person name="Qu D."/>
            <person name="Dong J."/>
            <person name="Sun L."/>
            <person name="Xue Y."/>
            <person name="Zhao A."/>
            <person name="Gao Y."/>
            <person name="Zhu J."/>
            <person name="Kan B."/>
            <person name="Ding K."/>
            <person name="Chen S."/>
            <person name="Cheng H."/>
            <person name="Yao Z."/>
            <person name="He B."/>
            <person name="Chen R."/>
            <person name="Ma D."/>
            <person name="Qiang B."/>
            <person name="Wen Y."/>
            <person name="Hou Y."/>
            <person name="Yu J."/>
        </authorList>
    </citation>
    <scope>NUCLEOTIDE SEQUENCE [LARGE SCALE GENOMIC DNA]</scope>
    <source>
        <strain>301 / Serotype 2a</strain>
    </source>
</reference>
<reference key="2">
    <citation type="journal article" date="2003" name="Infect. Immun.">
        <title>Complete genome sequence and comparative genomics of Shigella flexneri serotype 2a strain 2457T.</title>
        <authorList>
            <person name="Wei J."/>
            <person name="Goldberg M.B."/>
            <person name="Burland V."/>
            <person name="Venkatesan M.M."/>
            <person name="Deng W."/>
            <person name="Fournier G."/>
            <person name="Mayhew G.F."/>
            <person name="Plunkett G. III"/>
            <person name="Rose D.J."/>
            <person name="Darling A."/>
            <person name="Mau B."/>
            <person name="Perna N.T."/>
            <person name="Payne S.M."/>
            <person name="Runyen-Janecky L.J."/>
            <person name="Zhou S."/>
            <person name="Schwartz D.C."/>
            <person name="Blattner F.R."/>
        </authorList>
    </citation>
    <scope>NUCLEOTIDE SEQUENCE [LARGE SCALE GENOMIC DNA]</scope>
    <source>
        <strain>ATCC 700930 / 2457T / Serotype 2a</strain>
    </source>
</reference>
<dbReference type="EC" id="2.7.13.3" evidence="2"/>
<dbReference type="EC" id="3.1.3.-" evidence="2"/>
<dbReference type="EMBL" id="AE005674">
    <property type="protein sequence ID" value="AAN45374.1"/>
    <property type="molecule type" value="Genomic_DNA"/>
</dbReference>
<dbReference type="EMBL" id="AE014073">
    <property type="protein sequence ID" value="AAP18824.1"/>
    <property type="molecule type" value="Genomic_DNA"/>
</dbReference>
<dbReference type="RefSeq" id="NP_709667.1">
    <property type="nucleotide sequence ID" value="NC_004337.2"/>
</dbReference>
<dbReference type="RefSeq" id="WP_000190577.1">
    <property type="nucleotide sequence ID" value="NZ_WPGW01000069.1"/>
</dbReference>
<dbReference type="SMR" id="P0AFB7"/>
<dbReference type="STRING" id="198214.SF3939"/>
<dbReference type="PaxDb" id="198214-SF3939"/>
<dbReference type="GeneID" id="1026507"/>
<dbReference type="GeneID" id="93778067"/>
<dbReference type="KEGG" id="sfl:SF3939"/>
<dbReference type="KEGG" id="sfx:S3807"/>
<dbReference type="PATRIC" id="fig|198214.7.peg.4643"/>
<dbReference type="HOGENOM" id="CLU_000445_114_39_6"/>
<dbReference type="Proteomes" id="UP000001006">
    <property type="component" value="Chromosome"/>
</dbReference>
<dbReference type="Proteomes" id="UP000002673">
    <property type="component" value="Chromosome"/>
</dbReference>
<dbReference type="GO" id="GO:0005737">
    <property type="term" value="C:cytoplasm"/>
    <property type="evidence" value="ECO:0007669"/>
    <property type="project" value="UniProtKB-SubCell"/>
</dbReference>
<dbReference type="GO" id="GO:0005524">
    <property type="term" value="F:ATP binding"/>
    <property type="evidence" value="ECO:0007669"/>
    <property type="project" value="UniProtKB-KW"/>
</dbReference>
<dbReference type="GO" id="GO:0016787">
    <property type="term" value="F:hydrolase activity"/>
    <property type="evidence" value="ECO:0007669"/>
    <property type="project" value="UniProtKB-KW"/>
</dbReference>
<dbReference type="GO" id="GO:0000155">
    <property type="term" value="F:phosphorelay sensor kinase activity"/>
    <property type="evidence" value="ECO:0007669"/>
    <property type="project" value="InterPro"/>
</dbReference>
<dbReference type="GO" id="GO:0009399">
    <property type="term" value="P:nitrogen fixation"/>
    <property type="evidence" value="ECO:0007669"/>
    <property type="project" value="UniProtKB-KW"/>
</dbReference>
<dbReference type="GO" id="GO:0006355">
    <property type="term" value="P:regulation of DNA-templated transcription"/>
    <property type="evidence" value="ECO:0007669"/>
    <property type="project" value="InterPro"/>
</dbReference>
<dbReference type="CDD" id="cd16918">
    <property type="entry name" value="HATPase_Glnl-NtrB-like"/>
    <property type="match status" value="1"/>
</dbReference>
<dbReference type="CDD" id="cd00082">
    <property type="entry name" value="HisKA"/>
    <property type="match status" value="1"/>
</dbReference>
<dbReference type="CDD" id="cd00130">
    <property type="entry name" value="PAS"/>
    <property type="match status" value="1"/>
</dbReference>
<dbReference type="FunFam" id="1.10.287.130:FF:000005">
    <property type="entry name" value="Nitrogen regulation histidine kinase"/>
    <property type="match status" value="1"/>
</dbReference>
<dbReference type="FunFam" id="3.30.565.10:FF:000008">
    <property type="entry name" value="Nitrogen regulation histidine kinase"/>
    <property type="match status" value="1"/>
</dbReference>
<dbReference type="FunFam" id="3.30.450.20:FF:000033">
    <property type="entry name" value="Nitrogen regulation protein NR(II)"/>
    <property type="match status" value="1"/>
</dbReference>
<dbReference type="Gene3D" id="1.10.287.130">
    <property type="match status" value="1"/>
</dbReference>
<dbReference type="Gene3D" id="3.30.565.10">
    <property type="entry name" value="Histidine kinase-like ATPase, C-terminal domain"/>
    <property type="match status" value="1"/>
</dbReference>
<dbReference type="Gene3D" id="3.30.450.20">
    <property type="entry name" value="PAS domain"/>
    <property type="match status" value="1"/>
</dbReference>
<dbReference type="InterPro" id="IPR036890">
    <property type="entry name" value="HATPase_C_sf"/>
</dbReference>
<dbReference type="InterPro" id="IPR005467">
    <property type="entry name" value="His_kinase_dom"/>
</dbReference>
<dbReference type="InterPro" id="IPR003661">
    <property type="entry name" value="HisK_dim/P_dom"/>
</dbReference>
<dbReference type="InterPro" id="IPR036097">
    <property type="entry name" value="HisK_dim/P_sf"/>
</dbReference>
<dbReference type="InterPro" id="IPR000014">
    <property type="entry name" value="PAS"/>
</dbReference>
<dbReference type="InterPro" id="IPR035965">
    <property type="entry name" value="PAS-like_dom_sf"/>
</dbReference>
<dbReference type="InterPro" id="IPR013767">
    <property type="entry name" value="PAS_fold"/>
</dbReference>
<dbReference type="InterPro" id="IPR004358">
    <property type="entry name" value="Sig_transdc_His_kin-like_C"/>
</dbReference>
<dbReference type="NCBIfam" id="NF008293">
    <property type="entry name" value="PRK11073.1"/>
    <property type="match status" value="1"/>
</dbReference>
<dbReference type="PANTHER" id="PTHR43065">
    <property type="entry name" value="SENSOR HISTIDINE KINASE"/>
    <property type="match status" value="1"/>
</dbReference>
<dbReference type="PANTHER" id="PTHR43065:SF16">
    <property type="entry name" value="SENSORY HISTIDINE KINASE_PHOSPHATASE NTRB"/>
    <property type="match status" value="1"/>
</dbReference>
<dbReference type="Pfam" id="PF02518">
    <property type="entry name" value="HATPase_c"/>
    <property type="match status" value="1"/>
</dbReference>
<dbReference type="Pfam" id="PF00512">
    <property type="entry name" value="HisKA"/>
    <property type="match status" value="1"/>
</dbReference>
<dbReference type="Pfam" id="PF00989">
    <property type="entry name" value="PAS"/>
    <property type="match status" value="1"/>
</dbReference>
<dbReference type="PRINTS" id="PR00344">
    <property type="entry name" value="BCTRLSENSOR"/>
</dbReference>
<dbReference type="SMART" id="SM00387">
    <property type="entry name" value="HATPase_c"/>
    <property type="match status" value="1"/>
</dbReference>
<dbReference type="SMART" id="SM00388">
    <property type="entry name" value="HisKA"/>
    <property type="match status" value="1"/>
</dbReference>
<dbReference type="SMART" id="SM00091">
    <property type="entry name" value="PAS"/>
    <property type="match status" value="1"/>
</dbReference>
<dbReference type="SUPFAM" id="SSF55874">
    <property type="entry name" value="ATPase domain of HSP90 chaperone/DNA topoisomerase II/histidine kinase"/>
    <property type="match status" value="1"/>
</dbReference>
<dbReference type="SUPFAM" id="SSF47384">
    <property type="entry name" value="Homodimeric domain of signal transducing histidine kinase"/>
    <property type="match status" value="1"/>
</dbReference>
<dbReference type="SUPFAM" id="SSF55785">
    <property type="entry name" value="PYP-like sensor domain (PAS domain)"/>
    <property type="match status" value="1"/>
</dbReference>
<dbReference type="PROSITE" id="PS50109">
    <property type="entry name" value="HIS_KIN"/>
    <property type="match status" value="1"/>
</dbReference>
<dbReference type="PROSITE" id="PS50112">
    <property type="entry name" value="PAS"/>
    <property type="match status" value="1"/>
</dbReference>
<protein>
    <recommendedName>
        <fullName evidence="2">Sensory histidine kinase/phosphatase NtrB</fullName>
        <ecNumber evidence="2">2.7.13.3</ecNumber>
        <ecNumber evidence="2">3.1.3.-</ecNumber>
    </recommendedName>
    <alternativeName>
        <fullName evidence="2">Nitrogen regulation protein NR(II)</fullName>
    </alternativeName>
    <alternativeName>
        <fullName evidence="2">Nitrogen regulator II</fullName>
        <shortName evidence="2">NRII</shortName>
    </alternativeName>
</protein>
<gene>
    <name type="primary">glnL</name>
    <name type="ordered locus">SF3939</name>
    <name type="ordered locus">S3807</name>
</gene>
<evidence type="ECO:0000250" key="1"/>
<evidence type="ECO:0000250" key="2">
    <source>
        <dbReference type="UniProtKB" id="P0AFB5"/>
    </source>
</evidence>
<evidence type="ECO:0000255" key="3">
    <source>
        <dbReference type="PROSITE-ProRule" id="PRU00107"/>
    </source>
</evidence>
<evidence type="ECO:0000255" key="4">
    <source>
        <dbReference type="PROSITE-ProRule" id="PRU00140"/>
    </source>
</evidence>
<proteinExistence type="inferred from homology"/>
<organism>
    <name type="scientific">Shigella flexneri</name>
    <dbReference type="NCBI Taxonomy" id="623"/>
    <lineage>
        <taxon>Bacteria</taxon>
        <taxon>Pseudomonadati</taxon>
        <taxon>Pseudomonadota</taxon>
        <taxon>Gammaproteobacteria</taxon>
        <taxon>Enterobacterales</taxon>
        <taxon>Enterobacteriaceae</taxon>
        <taxon>Shigella</taxon>
    </lineage>
</organism>
<keyword id="KW-0067">ATP-binding</keyword>
<keyword id="KW-0963">Cytoplasm</keyword>
<keyword id="KW-0378">Hydrolase</keyword>
<keyword id="KW-0418">Kinase</keyword>
<keyword id="KW-0535">Nitrogen fixation</keyword>
<keyword id="KW-0547">Nucleotide-binding</keyword>
<keyword id="KW-0597">Phosphoprotein</keyword>
<keyword id="KW-1185">Reference proteome</keyword>
<keyword id="KW-0808">Transferase</keyword>
<keyword id="KW-0902">Two-component regulatory system</keyword>